<proteinExistence type="evidence at protein level"/>
<reference key="1">
    <citation type="journal article" date="1988" name="Photosyn. Res.">
        <title>Genes encoding ferredoxins from Anabaena sp. PCC 7937 and Synechococcus sp. PCC 7942: structure and regulation.</title>
        <authorList>
            <person name="van der Plas J."/>
            <person name="de Groot R.P."/>
            <person name="Woortman M.R."/>
            <person name="Cremers F."/>
            <person name="Borrias M."/>
            <person name="van Arkel G.A."/>
            <person name="Weisbeek P.J."/>
        </authorList>
    </citation>
    <scope>NUCLEOTIDE SEQUENCE [GENOMIC DNA]</scope>
</reference>
<reference key="2">
    <citation type="journal article" date="2007" name="Photosyn. Res.">
        <title>Complete nucleotide sequence of the freshwater unicellular cyanobacterium Synechococcus elongatus PCC 6301 chromosome: gene content and organization.</title>
        <authorList>
            <person name="Sugita C."/>
            <person name="Ogata K."/>
            <person name="Shikata M."/>
            <person name="Jikuya H."/>
            <person name="Takano J."/>
            <person name="Furumichi M."/>
            <person name="Kanehisa M."/>
            <person name="Omata T."/>
            <person name="Sugiura M."/>
            <person name="Sugita M."/>
        </authorList>
    </citation>
    <scope>NUCLEOTIDE SEQUENCE [LARGE SCALE GENOMIC DNA]</scope>
    <source>
        <strain>ATCC 27144 / PCC 6301 / SAUG 1402/1</strain>
    </source>
</reference>
<reference key="3">
    <citation type="journal article" date="1988" name="Biochem. J.">
        <title>Properties and structure of the soluble ferredoxin from Synechococcus 6301 (Anacystis nidulans). Relationship to gene sequences.</title>
        <authorList>
            <person name="Wada K."/>
            <person name="Masui R."/>
            <person name="Matsubara H."/>
            <person name="Rogers L.J."/>
        </authorList>
    </citation>
    <scope>PROTEIN SEQUENCE OF 2-99</scope>
</reference>
<feature type="initiator methionine" description="Removed" evidence="3">
    <location>
        <position position="1"/>
    </location>
</feature>
<feature type="chain" id="PRO_0000189378" description="Ferredoxin-1">
    <location>
        <begin position="2"/>
        <end position="99"/>
    </location>
</feature>
<feature type="domain" description="2Fe-2S ferredoxin-type" evidence="2">
    <location>
        <begin position="4"/>
        <end position="96"/>
    </location>
</feature>
<feature type="binding site" evidence="2">
    <location>
        <position position="42"/>
    </location>
    <ligand>
        <name>[2Fe-2S] cluster</name>
        <dbReference type="ChEBI" id="CHEBI:190135"/>
    </ligand>
</feature>
<feature type="binding site" evidence="2">
    <location>
        <position position="47"/>
    </location>
    <ligand>
        <name>[2Fe-2S] cluster</name>
        <dbReference type="ChEBI" id="CHEBI:190135"/>
    </ligand>
</feature>
<feature type="binding site" evidence="2">
    <location>
        <position position="50"/>
    </location>
    <ligand>
        <name>[2Fe-2S] cluster</name>
        <dbReference type="ChEBI" id="CHEBI:190135"/>
    </ligand>
</feature>
<feature type="binding site" evidence="2">
    <location>
        <position position="80"/>
    </location>
    <ligand>
        <name>[2Fe-2S] cluster</name>
        <dbReference type="ChEBI" id="CHEBI:190135"/>
    </ligand>
</feature>
<sequence>MATYKVTLVNAAEGLNTTIDVADDTYILDAAEEQGIDLPYSCRAGACSTCAGKVVSGTVDQSDQSFLDDDQIAAGFVLTCVAYPTSDVTIETHKEEDLY</sequence>
<protein>
    <recommendedName>
        <fullName>Ferredoxin-1</fullName>
    </recommendedName>
    <alternativeName>
        <fullName>Ferredoxin I</fullName>
    </alternativeName>
</protein>
<evidence type="ECO:0000250" key="1"/>
<evidence type="ECO:0000255" key="2">
    <source>
        <dbReference type="PROSITE-ProRule" id="PRU00465"/>
    </source>
</evidence>
<evidence type="ECO:0000269" key="3">
    <source>
    </source>
</evidence>
<evidence type="ECO:0000305" key="4"/>
<keyword id="KW-0001">2Fe-2S</keyword>
<keyword id="KW-0903">Direct protein sequencing</keyword>
<keyword id="KW-0249">Electron transport</keyword>
<keyword id="KW-0408">Iron</keyword>
<keyword id="KW-0411">Iron-sulfur</keyword>
<keyword id="KW-0479">Metal-binding</keyword>
<keyword id="KW-0813">Transport</keyword>
<organism>
    <name type="scientific">Synechococcus sp. (strain ATCC 27144 / PCC 6301 / SAUG 1402/1)</name>
    <name type="common">Anacystis nidulans</name>
    <dbReference type="NCBI Taxonomy" id="269084"/>
    <lineage>
        <taxon>Bacteria</taxon>
        <taxon>Bacillati</taxon>
        <taxon>Cyanobacteriota</taxon>
        <taxon>Cyanophyceae</taxon>
        <taxon>Synechococcales</taxon>
        <taxon>Synechococcaceae</taxon>
        <taxon>Synechococcus</taxon>
    </lineage>
</organism>
<accession>P0A3D3</accession>
<accession>P06517</accession>
<comment type="function">
    <text>Ferredoxins are iron-sulfur proteins that transfer electrons in a wide variety of metabolic reactions.</text>
</comment>
<comment type="cofactor">
    <cofactor>
        <name>[2Fe-2S] cluster</name>
        <dbReference type="ChEBI" id="CHEBI:190135"/>
    </cofactor>
    <text>Binds 1 [2Fe-2S] cluster.</text>
</comment>
<comment type="subunit">
    <text evidence="1">Forms a complex with heterodimeric ferredoxin-thioredoxin reductase (FTR) and thioredoxin.</text>
</comment>
<comment type="similarity">
    <text evidence="4">Belongs to the 2Fe2S plant-type ferredoxin family.</text>
</comment>
<gene>
    <name type="primary">petF1</name>
    <name type="ordered locus">syc2484_c</name>
</gene>
<name>FER1_SYNP6</name>
<dbReference type="EMBL" id="M35127">
    <property type="protein sequence ID" value="AAA22054.1"/>
    <property type="molecule type" value="Genomic_DNA"/>
</dbReference>
<dbReference type="EMBL" id="AP008231">
    <property type="protein sequence ID" value="BAD80674.1"/>
    <property type="molecule type" value="Genomic_DNA"/>
</dbReference>
<dbReference type="RefSeq" id="WP_011244794.1">
    <property type="nucleotide sequence ID" value="NZ_CP085785.1"/>
</dbReference>
<dbReference type="SMR" id="P0A3D3"/>
<dbReference type="GeneID" id="72430467"/>
<dbReference type="KEGG" id="syc:syc2484_c"/>
<dbReference type="eggNOG" id="COG0633">
    <property type="taxonomic scope" value="Bacteria"/>
</dbReference>
<dbReference type="Proteomes" id="UP000001175">
    <property type="component" value="Chromosome"/>
</dbReference>
<dbReference type="GO" id="GO:0051537">
    <property type="term" value="F:2 iron, 2 sulfur cluster binding"/>
    <property type="evidence" value="ECO:0007669"/>
    <property type="project" value="UniProtKB-KW"/>
</dbReference>
<dbReference type="GO" id="GO:0009055">
    <property type="term" value="F:electron transfer activity"/>
    <property type="evidence" value="ECO:0007669"/>
    <property type="project" value="InterPro"/>
</dbReference>
<dbReference type="GO" id="GO:0046872">
    <property type="term" value="F:metal ion binding"/>
    <property type="evidence" value="ECO:0007669"/>
    <property type="project" value="UniProtKB-KW"/>
</dbReference>
<dbReference type="GO" id="GO:0022900">
    <property type="term" value="P:electron transport chain"/>
    <property type="evidence" value="ECO:0007669"/>
    <property type="project" value="InterPro"/>
</dbReference>
<dbReference type="CDD" id="cd00207">
    <property type="entry name" value="fer2"/>
    <property type="match status" value="1"/>
</dbReference>
<dbReference type="FunFam" id="3.10.20.30:FF:000014">
    <property type="entry name" value="Ferredoxin"/>
    <property type="match status" value="1"/>
</dbReference>
<dbReference type="Gene3D" id="3.10.20.30">
    <property type="match status" value="1"/>
</dbReference>
<dbReference type="InterPro" id="IPR036010">
    <property type="entry name" value="2Fe-2S_ferredoxin-like_sf"/>
</dbReference>
<dbReference type="InterPro" id="IPR001041">
    <property type="entry name" value="2Fe-2S_ferredoxin-type"/>
</dbReference>
<dbReference type="InterPro" id="IPR006058">
    <property type="entry name" value="2Fe2S_fd_BS"/>
</dbReference>
<dbReference type="InterPro" id="IPR012675">
    <property type="entry name" value="Beta-grasp_dom_sf"/>
</dbReference>
<dbReference type="InterPro" id="IPR010241">
    <property type="entry name" value="Fd_pln"/>
</dbReference>
<dbReference type="NCBIfam" id="TIGR02008">
    <property type="entry name" value="fdx_plant"/>
    <property type="match status" value="1"/>
</dbReference>
<dbReference type="PANTHER" id="PTHR43112">
    <property type="entry name" value="FERREDOXIN"/>
    <property type="match status" value="1"/>
</dbReference>
<dbReference type="PANTHER" id="PTHR43112:SF3">
    <property type="entry name" value="FERREDOXIN-2, CHLOROPLASTIC"/>
    <property type="match status" value="1"/>
</dbReference>
<dbReference type="Pfam" id="PF00111">
    <property type="entry name" value="Fer2"/>
    <property type="match status" value="1"/>
</dbReference>
<dbReference type="SUPFAM" id="SSF54292">
    <property type="entry name" value="2Fe-2S ferredoxin-like"/>
    <property type="match status" value="1"/>
</dbReference>
<dbReference type="PROSITE" id="PS00197">
    <property type="entry name" value="2FE2S_FER_1"/>
    <property type="match status" value="1"/>
</dbReference>
<dbReference type="PROSITE" id="PS51085">
    <property type="entry name" value="2FE2S_FER_2"/>
    <property type="match status" value="1"/>
</dbReference>